<name>CORZ_DROSI</name>
<evidence type="ECO:0000250" key="1">
    <source>
        <dbReference type="UniProtKB" id="Q26377"/>
    </source>
</evidence>
<evidence type="ECO:0000255" key="2"/>
<evidence type="ECO:0000269" key="3">
    <source>
    </source>
</evidence>
<evidence type="ECO:0000305" key="4"/>
<evidence type="ECO:0000312" key="5">
    <source>
        <dbReference type="EMBL" id="CAH65472.1"/>
    </source>
</evidence>
<keyword id="KW-0027">Amidation</keyword>
<keyword id="KW-0165">Cleavage on pair of basic residues</keyword>
<keyword id="KW-0527">Neuropeptide</keyword>
<keyword id="KW-0873">Pyrrolidone carboxylic acid</keyword>
<keyword id="KW-1185">Reference proteome</keyword>
<keyword id="KW-0964">Secreted</keyword>
<keyword id="KW-0732">Signal</keyword>
<comment type="function">
    <text evidence="1">Cardioactive peptide. Corazonin is probably involved in the physiological regulation of the heart beat. Clock (Clk) and cycle (cyc) proteins negatively regulate Crz transcription in a cell-specific manner (By similarity).</text>
</comment>
<comment type="subcellular location">
    <molecule>Corazonin</molecule>
    <subcellularLocation>
        <location evidence="1">Secreted</location>
    </subcellularLocation>
</comment>
<comment type="subcellular location">
    <molecule>Corazonin precursor-related peptide</molecule>
    <subcellularLocation>
        <location evidence="1">Secreted</location>
    </subcellularLocation>
</comment>
<comment type="tissue specificity">
    <text evidence="3">Expression is restricted to 24 neurons in the larval CNS (8 in the brain and 16 in the ventral nerve cord) and 12-16 neurons in the pars lateralis of the adult brain.</text>
</comment>
<comment type="similarity">
    <text evidence="4">Belongs to the corazonin family.</text>
</comment>
<dbReference type="EMBL" id="AJ851891">
    <property type="protein sequence ID" value="CAH65472.1"/>
    <property type="molecule type" value="Genomic_DNA"/>
</dbReference>
<dbReference type="EMBL" id="CM000364">
    <property type="protein sequence ID" value="EDX12962.1"/>
    <property type="molecule type" value="Genomic_DNA"/>
</dbReference>
<dbReference type="STRING" id="7240.Q5W1L5"/>
<dbReference type="EnsemblMetazoa" id="FBtr0218865">
    <property type="protein sequence ID" value="FBpp0217357"/>
    <property type="gene ID" value="FBgn0064364"/>
</dbReference>
<dbReference type="EnsemblMetazoa" id="XM_002103423.4">
    <property type="protein sequence ID" value="XP_002103459.1"/>
    <property type="gene ID" value="LOC6728108"/>
</dbReference>
<dbReference type="GeneID" id="6728108"/>
<dbReference type="KEGG" id="dsi:Dsimw501_GD18955"/>
<dbReference type="HOGENOM" id="CLU_1679760_0_0_1"/>
<dbReference type="OMA" id="RHRQSNE"/>
<dbReference type="OrthoDB" id="6436322at2759"/>
<dbReference type="PhylomeDB" id="Q5W1L5"/>
<dbReference type="Proteomes" id="UP000000304">
    <property type="component" value="Chromosome 3R"/>
</dbReference>
<dbReference type="Bgee" id="FBgn0064364">
    <property type="expression patterns" value="Expressed in embryo and 2 other cell types or tissues"/>
</dbReference>
<dbReference type="GO" id="GO:0005576">
    <property type="term" value="C:extracellular region"/>
    <property type="evidence" value="ECO:0000250"/>
    <property type="project" value="UniProtKB"/>
</dbReference>
<dbReference type="GO" id="GO:0005615">
    <property type="term" value="C:extracellular space"/>
    <property type="evidence" value="ECO:0007669"/>
    <property type="project" value="EnsemblMetazoa"/>
</dbReference>
<dbReference type="GO" id="GO:0071858">
    <property type="term" value="F:corazonin receptor binding"/>
    <property type="evidence" value="ECO:0007669"/>
    <property type="project" value="EnsemblMetazoa"/>
</dbReference>
<dbReference type="GO" id="GO:0005184">
    <property type="term" value="F:neuropeptide hormone activity"/>
    <property type="evidence" value="ECO:0000250"/>
    <property type="project" value="UniProtKB"/>
</dbReference>
<dbReference type="GO" id="GO:0006117">
    <property type="term" value="P:acetaldehyde metabolic process"/>
    <property type="evidence" value="ECO:0007669"/>
    <property type="project" value="EnsemblMetazoa"/>
</dbReference>
<dbReference type="GO" id="GO:0048149">
    <property type="term" value="P:behavioral response to ethanol"/>
    <property type="evidence" value="ECO:0007669"/>
    <property type="project" value="EnsemblMetazoa"/>
</dbReference>
<dbReference type="GO" id="GO:0071361">
    <property type="term" value="P:cellular response to ethanol"/>
    <property type="evidence" value="ECO:0007669"/>
    <property type="project" value="EnsemblMetazoa"/>
</dbReference>
<dbReference type="GO" id="GO:0007619">
    <property type="term" value="P:courtship behavior"/>
    <property type="evidence" value="ECO:0007669"/>
    <property type="project" value="EnsemblMetazoa"/>
</dbReference>
<dbReference type="GO" id="GO:0007218">
    <property type="term" value="P:neuropeptide signaling pathway"/>
    <property type="evidence" value="ECO:0007669"/>
    <property type="project" value="UniProtKB-KW"/>
</dbReference>
<dbReference type="GO" id="GO:0045823">
    <property type="term" value="P:positive regulation of heart contraction"/>
    <property type="evidence" value="ECO:0000250"/>
    <property type="project" value="UniProtKB"/>
</dbReference>
<dbReference type="InterPro" id="IPR020190">
    <property type="entry name" value="Procorazonin"/>
</dbReference>
<dbReference type="Pfam" id="PF17308">
    <property type="entry name" value="Corazonin"/>
    <property type="match status" value="1"/>
</dbReference>
<proteinExistence type="evidence at transcript level"/>
<reference evidence="5" key="1">
    <citation type="journal article" date="2005" name="J. Comp. Neurol.">
        <title>Comparative analysis of Corazonin-encoding genes (Crz's) in Drosophila species and functional insights into Crz-expressing neurons.</title>
        <authorList>
            <person name="Choi Y.J."/>
            <person name="Lee G."/>
            <person name="Hall J.C."/>
            <person name="Park J.H."/>
        </authorList>
    </citation>
    <scope>NUCLEOTIDE SEQUENCE [GENOMIC DNA]</scope>
    <scope>TISSUE SPECIFICITY</scope>
    <source>
        <tissue evidence="3">Head</tissue>
    </source>
</reference>
<reference key="2">
    <citation type="journal article" date="2007" name="Nature">
        <title>Evolution of genes and genomes on the Drosophila phylogeny.</title>
        <authorList>
            <consortium name="Drosophila 12 genomes consortium"/>
        </authorList>
    </citation>
    <scope>NUCLEOTIDE SEQUENCE [LARGE SCALE GENOMIC DNA]</scope>
</reference>
<accession>Q5W1L5</accession>
<accession>B4QZW4</accession>
<gene>
    <name type="primary">Crz</name>
    <name type="ORF">GD18955</name>
</gene>
<protein>
    <recommendedName>
        <fullName>Pro-corazonin</fullName>
        <shortName>Crz</shortName>
        <shortName>Ds-Crz</shortName>
    </recommendedName>
    <component>
        <recommendedName>
            <fullName>Corazonin</fullName>
        </recommendedName>
    </component>
    <component>
        <recommendedName>
            <fullName>Corazonin precursor-related peptide</fullName>
            <shortName>CPRP</shortName>
        </recommendedName>
    </component>
</protein>
<feature type="signal peptide" evidence="1">
    <location>
        <begin position="1"/>
        <end position="19"/>
    </location>
</feature>
<feature type="chain" id="PRO_0000341612" description="Pro-corazonin" evidence="2">
    <location>
        <begin position="20"/>
        <end position="154"/>
    </location>
</feature>
<feature type="peptide" id="PRO_0000341503" description="Corazonin">
    <location>
        <begin position="20"/>
        <end position="30"/>
    </location>
</feature>
<feature type="peptide" id="PRO_0000341504" description="Corazonin precursor-related peptide">
    <location>
        <begin position="34"/>
        <end position="67"/>
    </location>
</feature>
<feature type="propeptide" id="PRO_0000341505" evidence="1">
    <location>
        <begin position="70"/>
        <end position="154"/>
    </location>
</feature>
<feature type="modified residue" description="Pyrrolidone carboxylic acid" evidence="1">
    <location>
        <position position="20"/>
    </location>
</feature>
<feature type="modified residue" description="Asparagine amide" evidence="1">
    <location>
        <position position="30"/>
    </location>
</feature>
<organism>
    <name type="scientific">Drosophila simulans</name>
    <name type="common">Fruit fly</name>
    <dbReference type="NCBI Taxonomy" id="7240"/>
    <lineage>
        <taxon>Eukaryota</taxon>
        <taxon>Metazoa</taxon>
        <taxon>Ecdysozoa</taxon>
        <taxon>Arthropoda</taxon>
        <taxon>Hexapoda</taxon>
        <taxon>Insecta</taxon>
        <taxon>Pterygota</taxon>
        <taxon>Neoptera</taxon>
        <taxon>Endopterygota</taxon>
        <taxon>Diptera</taxon>
        <taxon>Brachycera</taxon>
        <taxon>Muscomorpha</taxon>
        <taxon>Ephydroidea</taxon>
        <taxon>Drosophilidae</taxon>
        <taxon>Drosophila</taxon>
        <taxon>Sophophora</taxon>
    </lineage>
</organism>
<sequence length="154" mass="17194">MLRLLLLPLFLFTLSMCMGQTFQYSRGWTNGKRSFNAASPLLANGHLHRGSELGLTDLYDLQDWSSDRRLERCLSQLQRSLIARNCVPGSDFNANRVDPDPENSVHPRLSNINGENVLYSSANIPNRHRQSNELLEELSAAGGASAEPNVFGKH</sequence>